<name>APG_BRANA</name>
<comment type="tissue specificity">
    <text>Found in anther, only in male fertile plants.</text>
</comment>
<comment type="developmental stage">
    <text>Expressed in male gametogenesis, during microspore development. Higher expression is found during microspore mitosis with a dramatic decline during pollen maturation.</text>
</comment>
<comment type="similarity">
    <text evidence="3">Belongs to the 'GDSL' lipolytic enzyme family.</text>
</comment>
<proteinExistence type="evidence at transcript level"/>
<organism>
    <name type="scientific">Brassica napus</name>
    <name type="common">Rape</name>
    <dbReference type="NCBI Taxonomy" id="3708"/>
    <lineage>
        <taxon>Eukaryota</taxon>
        <taxon>Viridiplantae</taxon>
        <taxon>Streptophyta</taxon>
        <taxon>Embryophyta</taxon>
        <taxon>Tracheophyta</taxon>
        <taxon>Spermatophyta</taxon>
        <taxon>Magnoliopsida</taxon>
        <taxon>eudicotyledons</taxon>
        <taxon>Gunneridae</taxon>
        <taxon>Pentapetalae</taxon>
        <taxon>rosids</taxon>
        <taxon>malvids</taxon>
        <taxon>Brassicales</taxon>
        <taxon>Brassicaceae</taxon>
        <taxon>Brassiceae</taxon>
        <taxon>Brassica</taxon>
    </lineage>
</organism>
<protein>
    <recommendedName>
        <fullName>Anther-specific proline-rich protein APG</fullName>
    </recommendedName>
    <alternativeName>
        <fullName>Protein CEX</fullName>
    </alternativeName>
</protein>
<evidence type="ECO:0000250" key="1"/>
<evidence type="ECO:0000256" key="2">
    <source>
        <dbReference type="SAM" id="MobiDB-lite"/>
    </source>
</evidence>
<evidence type="ECO:0000305" key="3"/>
<sequence length="449" mass="48780">PPKPQPKPPPKPQPKPPPAPTPSPCPPQPPKPQPKPPPAPTPSPCPPQPPKPQPKPPPAPGPSPKPGPSPSPPKPPPSPAPKPVPPPSPSPKPSPPKPPAPSPKPSPPKPPAPSPPKPQNKTIPAVFFFGDSIFDTGNNNNLDTKLKCNYRPYGMDFPMGVATGRFSNGRVASDYISKYLGVKEIVPAYVDKKLQQNNELQQSDLLTGVSFASGGAGYLPQTSESWKVTTMLDQLTYFQDYKKRMKKLVGKKKTKKIVSKGAAIVVAGSNDLIYTYFGNGAQHLKNDVDSFTTMMADSAASFVLQLYGYGARRIGVIGTPPIGCTPSQRVKKKKICNEDLNYAAQLFNSKLVIILGQLSKTLPNSTIVYGDIYSIFSKMLESPEDYGFEEIKKPCCKIGLTKGGVFCKERTLKNMSNASSYLFWDGLHPSQRAYEISNRKLVKKYIHFI</sequence>
<feature type="chain" id="PRO_0000168117" description="Anther-specific proline-rich protein APG">
    <location>
        <begin position="1" status="less than"/>
        <end position="449"/>
    </location>
</feature>
<feature type="region of interest" description="Disordered" evidence="2">
    <location>
        <begin position="1"/>
        <end position="123"/>
    </location>
</feature>
<feature type="compositionally biased region" description="Pro residues" evidence="2">
    <location>
        <begin position="1"/>
        <end position="118"/>
    </location>
</feature>
<feature type="active site" description="Nucleophile" evidence="1">
    <location>
        <position position="132"/>
    </location>
</feature>
<feature type="active site" evidence="1">
    <location>
        <position position="425"/>
    </location>
</feature>
<feature type="active site" evidence="1">
    <location>
        <position position="428"/>
    </location>
</feature>
<feature type="non-terminal residue">
    <location>
        <position position="1"/>
    </location>
</feature>
<dbReference type="EMBL" id="X60376">
    <property type="protein sequence ID" value="CAA42924.1"/>
    <property type="molecule type" value="mRNA"/>
</dbReference>
<dbReference type="PIR" id="S16748">
    <property type="entry name" value="S16748"/>
</dbReference>
<dbReference type="SMR" id="P40603"/>
<dbReference type="GO" id="GO:0016298">
    <property type="term" value="F:lipase activity"/>
    <property type="evidence" value="ECO:0007669"/>
    <property type="project" value="InterPro"/>
</dbReference>
<dbReference type="GO" id="GO:0006629">
    <property type="term" value="P:lipid metabolic process"/>
    <property type="evidence" value="ECO:0007669"/>
    <property type="project" value="InterPro"/>
</dbReference>
<dbReference type="CDD" id="cd01837">
    <property type="entry name" value="SGNH_plant_lipase_like"/>
    <property type="match status" value="1"/>
</dbReference>
<dbReference type="FunFam" id="3.40.50.1110:FF:000003">
    <property type="entry name" value="GDSL esterase/lipase APG"/>
    <property type="match status" value="1"/>
</dbReference>
<dbReference type="Gene3D" id="3.40.50.1110">
    <property type="entry name" value="SGNH hydrolase"/>
    <property type="match status" value="1"/>
</dbReference>
<dbReference type="InterPro" id="IPR001087">
    <property type="entry name" value="GDSL"/>
</dbReference>
<dbReference type="InterPro" id="IPR050592">
    <property type="entry name" value="GDSL_lipolytic_enzyme"/>
</dbReference>
<dbReference type="InterPro" id="IPR008265">
    <property type="entry name" value="Lipase_GDSL_AS"/>
</dbReference>
<dbReference type="InterPro" id="IPR036514">
    <property type="entry name" value="SGNH_hydro_sf"/>
</dbReference>
<dbReference type="InterPro" id="IPR035669">
    <property type="entry name" value="SGNH_plant_lipase-like"/>
</dbReference>
<dbReference type="PANTHER" id="PTHR45642:SF49">
    <property type="entry name" value="ANTHER-SPECIFIC PROLINE-RICH PROTEIN APG"/>
    <property type="match status" value="1"/>
</dbReference>
<dbReference type="PANTHER" id="PTHR45642">
    <property type="entry name" value="GDSL ESTERASE/LIPASE EXL3"/>
    <property type="match status" value="1"/>
</dbReference>
<dbReference type="Pfam" id="PF00657">
    <property type="entry name" value="Lipase_GDSL"/>
    <property type="match status" value="1"/>
</dbReference>
<dbReference type="SUPFAM" id="SSF52266">
    <property type="entry name" value="SGNH hydrolase"/>
    <property type="match status" value="1"/>
</dbReference>
<dbReference type="PROSITE" id="PS01098">
    <property type="entry name" value="LIPASE_GDSL_SER"/>
    <property type="match status" value="1"/>
</dbReference>
<reference key="1">
    <citation type="journal article" date="1993" name="Plant J.">
        <title>Gametophytic and sporophytic expression of an anther-specific Arabidopsis thaliana gene.</title>
        <authorList>
            <person name="Roberts M.R."/>
            <person name="Foster G.D."/>
            <person name="Blundell R.P."/>
            <person name="Robinson S.W."/>
            <person name="Kumar A."/>
            <person name="Draper J."/>
            <person name="Scott R."/>
        </authorList>
    </citation>
    <scope>NUCLEOTIDE SEQUENCE [MRNA]</scope>
</reference>
<gene>
    <name type="primary">APG</name>
    <name type="synonym">CEX</name>
</gene>
<accession>P40603</accession>